<keyword id="KW-0488">Methylation</keyword>
<keyword id="KW-1185">Reference proteome</keyword>
<keyword id="KW-0687">Ribonucleoprotein</keyword>
<keyword id="KW-0689">Ribosomal protein</keyword>
<keyword id="KW-0694">RNA-binding</keyword>
<keyword id="KW-0699">rRNA-binding</keyword>
<keyword id="KW-0820">tRNA-binding</keyword>
<evidence type="ECO:0000250" key="1"/>
<evidence type="ECO:0000255" key="2">
    <source>
        <dbReference type="HAMAP-Rule" id="MF_00403"/>
    </source>
</evidence>
<evidence type="ECO:0000256" key="3">
    <source>
        <dbReference type="SAM" id="MobiDB-lite"/>
    </source>
</evidence>
<evidence type="ECO:0000305" key="4"/>
<proteinExistence type="inferred from homology"/>
<gene>
    <name evidence="2" type="primary">rpsL</name>
    <name type="ordered locus">CHU_3166</name>
</gene>
<feature type="chain" id="PRO_0000263552" description="Small ribosomal subunit protein uS12">
    <location>
        <begin position="1"/>
        <end position="137"/>
    </location>
</feature>
<feature type="region of interest" description="Disordered" evidence="3">
    <location>
        <begin position="104"/>
        <end position="137"/>
    </location>
</feature>
<feature type="compositionally biased region" description="Basic residues" evidence="3">
    <location>
        <begin position="111"/>
        <end position="123"/>
    </location>
</feature>
<feature type="compositionally biased region" description="Low complexity" evidence="3">
    <location>
        <begin position="124"/>
        <end position="137"/>
    </location>
</feature>
<feature type="modified residue" description="3-methylthioaspartic acid" evidence="1">
    <location>
        <position position="89"/>
    </location>
</feature>
<protein>
    <recommendedName>
        <fullName evidence="2">Small ribosomal subunit protein uS12</fullName>
    </recommendedName>
    <alternativeName>
        <fullName evidence="4">30S ribosomal protein S12</fullName>
    </alternativeName>
</protein>
<accession>Q11QA8</accession>
<dbReference type="EMBL" id="CP000383">
    <property type="protein sequence ID" value="ABG60406.1"/>
    <property type="molecule type" value="Genomic_DNA"/>
</dbReference>
<dbReference type="RefSeq" id="WP_011586515.1">
    <property type="nucleotide sequence ID" value="NZ_FPJX01000011.1"/>
</dbReference>
<dbReference type="SMR" id="Q11QA8"/>
<dbReference type="STRING" id="269798.CHU_3166"/>
<dbReference type="KEGG" id="chu:CHU_3166"/>
<dbReference type="eggNOG" id="COG0048">
    <property type="taxonomic scope" value="Bacteria"/>
</dbReference>
<dbReference type="HOGENOM" id="CLU_104295_1_2_10"/>
<dbReference type="OrthoDB" id="9802366at2"/>
<dbReference type="Proteomes" id="UP000001822">
    <property type="component" value="Chromosome"/>
</dbReference>
<dbReference type="GO" id="GO:0015935">
    <property type="term" value="C:small ribosomal subunit"/>
    <property type="evidence" value="ECO:0007669"/>
    <property type="project" value="InterPro"/>
</dbReference>
<dbReference type="GO" id="GO:0019843">
    <property type="term" value="F:rRNA binding"/>
    <property type="evidence" value="ECO:0007669"/>
    <property type="project" value="UniProtKB-UniRule"/>
</dbReference>
<dbReference type="GO" id="GO:0003735">
    <property type="term" value="F:structural constituent of ribosome"/>
    <property type="evidence" value="ECO:0007669"/>
    <property type="project" value="InterPro"/>
</dbReference>
<dbReference type="GO" id="GO:0000049">
    <property type="term" value="F:tRNA binding"/>
    <property type="evidence" value="ECO:0007669"/>
    <property type="project" value="UniProtKB-UniRule"/>
</dbReference>
<dbReference type="GO" id="GO:0006412">
    <property type="term" value="P:translation"/>
    <property type="evidence" value="ECO:0007669"/>
    <property type="project" value="UniProtKB-UniRule"/>
</dbReference>
<dbReference type="CDD" id="cd03368">
    <property type="entry name" value="Ribosomal_S12"/>
    <property type="match status" value="1"/>
</dbReference>
<dbReference type="FunFam" id="2.40.50.140:FF:000001">
    <property type="entry name" value="30S ribosomal protein S12"/>
    <property type="match status" value="1"/>
</dbReference>
<dbReference type="Gene3D" id="2.40.50.140">
    <property type="entry name" value="Nucleic acid-binding proteins"/>
    <property type="match status" value="1"/>
</dbReference>
<dbReference type="HAMAP" id="MF_00403_B">
    <property type="entry name" value="Ribosomal_uS12_B"/>
    <property type="match status" value="1"/>
</dbReference>
<dbReference type="InterPro" id="IPR012340">
    <property type="entry name" value="NA-bd_OB-fold"/>
</dbReference>
<dbReference type="InterPro" id="IPR006032">
    <property type="entry name" value="Ribosomal_uS12"/>
</dbReference>
<dbReference type="InterPro" id="IPR005679">
    <property type="entry name" value="Ribosomal_uS12_bac"/>
</dbReference>
<dbReference type="NCBIfam" id="TIGR00981">
    <property type="entry name" value="rpsL_bact"/>
    <property type="match status" value="1"/>
</dbReference>
<dbReference type="PANTHER" id="PTHR11652">
    <property type="entry name" value="30S RIBOSOMAL PROTEIN S12 FAMILY MEMBER"/>
    <property type="match status" value="1"/>
</dbReference>
<dbReference type="Pfam" id="PF00164">
    <property type="entry name" value="Ribosom_S12_S23"/>
    <property type="match status" value="1"/>
</dbReference>
<dbReference type="PIRSF" id="PIRSF002133">
    <property type="entry name" value="Ribosomal_S12/S23"/>
    <property type="match status" value="1"/>
</dbReference>
<dbReference type="PRINTS" id="PR01034">
    <property type="entry name" value="RIBOSOMALS12"/>
</dbReference>
<dbReference type="SUPFAM" id="SSF50249">
    <property type="entry name" value="Nucleic acid-binding proteins"/>
    <property type="match status" value="1"/>
</dbReference>
<dbReference type="PROSITE" id="PS00055">
    <property type="entry name" value="RIBOSOMAL_S12"/>
    <property type="match status" value="1"/>
</dbReference>
<sequence length="137" mass="15052">MPTIQQLVRKGREQLVFKSKSPALDSCPQRRGVCTRVYTTTPKKPNSAMRKVARVRLTNSKEVNAYIPGEGHNLQEHSIVLIRGGRVKDLPGVRYHIVRGALDTAGVNGRKQSRSKYGAKRPKPGQAAAAPAKGKKK</sequence>
<organism>
    <name type="scientific">Cytophaga hutchinsonii (strain ATCC 33406 / DSM 1761 / CIP 103989 / NBRC 15051 / NCIMB 9469 / D465)</name>
    <dbReference type="NCBI Taxonomy" id="269798"/>
    <lineage>
        <taxon>Bacteria</taxon>
        <taxon>Pseudomonadati</taxon>
        <taxon>Bacteroidota</taxon>
        <taxon>Cytophagia</taxon>
        <taxon>Cytophagales</taxon>
        <taxon>Cytophagaceae</taxon>
        <taxon>Cytophaga</taxon>
    </lineage>
</organism>
<comment type="function">
    <text evidence="2">With S4 and S5 plays an important role in translational accuracy.</text>
</comment>
<comment type="function">
    <text evidence="2">Interacts with and stabilizes bases of the 16S rRNA that are involved in tRNA selection in the A site and with the mRNA backbone. Located at the interface of the 30S and 50S subunits, it traverses the body of the 30S subunit contacting proteins on the other side and probably holding the rRNA structure together. The combined cluster of proteins S8, S12 and S17 appears to hold together the shoulder and platform of the 30S subunit.</text>
</comment>
<comment type="subunit">
    <text evidence="2">Part of the 30S ribosomal subunit. Contacts proteins S8 and S17. May interact with IF1 in the 30S initiation complex.</text>
</comment>
<comment type="similarity">
    <text evidence="2">Belongs to the universal ribosomal protein uS12 family.</text>
</comment>
<reference key="1">
    <citation type="journal article" date="2007" name="Appl. Environ. Microbiol.">
        <title>Genome sequence of the cellulolytic gliding bacterium Cytophaga hutchinsonii.</title>
        <authorList>
            <person name="Xie G."/>
            <person name="Bruce D.C."/>
            <person name="Challacombe J.F."/>
            <person name="Chertkov O."/>
            <person name="Detter J.C."/>
            <person name="Gilna P."/>
            <person name="Han C.S."/>
            <person name="Lucas S."/>
            <person name="Misra M."/>
            <person name="Myers G.L."/>
            <person name="Richardson P."/>
            <person name="Tapia R."/>
            <person name="Thayer N."/>
            <person name="Thompson L.S."/>
            <person name="Brettin T.S."/>
            <person name="Henrissat B."/>
            <person name="Wilson D.B."/>
            <person name="McBride M.J."/>
        </authorList>
    </citation>
    <scope>NUCLEOTIDE SEQUENCE [LARGE SCALE GENOMIC DNA]</scope>
    <source>
        <strain>ATCC 33406 / DSM 1761 / JCM 20678 / CIP 103989 / IAM 12607 / NBRC 15051 / NCIMB 9469 / D465</strain>
    </source>
</reference>
<name>RS12_CYTH3</name>